<comment type="function">
    <text evidence="6">Required for hyphal maturation and for septation.</text>
</comment>
<comment type="catalytic activity">
    <reaction>
        <text>L-seryl-[protein] + ATP = O-phospho-L-seryl-[protein] + ADP + H(+)</text>
        <dbReference type="Rhea" id="RHEA:17989"/>
        <dbReference type="Rhea" id="RHEA-COMP:9863"/>
        <dbReference type="Rhea" id="RHEA-COMP:11604"/>
        <dbReference type="ChEBI" id="CHEBI:15378"/>
        <dbReference type="ChEBI" id="CHEBI:29999"/>
        <dbReference type="ChEBI" id="CHEBI:30616"/>
        <dbReference type="ChEBI" id="CHEBI:83421"/>
        <dbReference type="ChEBI" id="CHEBI:456216"/>
        <dbReference type="EC" id="2.7.11.1"/>
    </reaction>
</comment>
<comment type="catalytic activity">
    <reaction>
        <text>L-threonyl-[protein] + ATP = O-phospho-L-threonyl-[protein] + ADP + H(+)</text>
        <dbReference type="Rhea" id="RHEA:46608"/>
        <dbReference type="Rhea" id="RHEA-COMP:11060"/>
        <dbReference type="Rhea" id="RHEA-COMP:11605"/>
        <dbReference type="ChEBI" id="CHEBI:15378"/>
        <dbReference type="ChEBI" id="CHEBI:30013"/>
        <dbReference type="ChEBI" id="CHEBI:30616"/>
        <dbReference type="ChEBI" id="CHEBI:61977"/>
        <dbReference type="ChEBI" id="CHEBI:456216"/>
        <dbReference type="EC" id="2.7.11.1"/>
    </reaction>
</comment>
<comment type="similarity">
    <text evidence="7">Belongs to the protein kinase superfamily. STE Ser/Thr protein kinase family. STE20 subfamily.</text>
</comment>
<evidence type="ECO:0000255" key="1">
    <source>
        <dbReference type="PROSITE-ProRule" id="PRU00057"/>
    </source>
</evidence>
<evidence type="ECO:0000255" key="2">
    <source>
        <dbReference type="PROSITE-ProRule" id="PRU00145"/>
    </source>
</evidence>
<evidence type="ECO:0000255" key="3">
    <source>
        <dbReference type="PROSITE-ProRule" id="PRU00159"/>
    </source>
</evidence>
<evidence type="ECO:0000255" key="4">
    <source>
        <dbReference type="PROSITE-ProRule" id="PRU10027"/>
    </source>
</evidence>
<evidence type="ECO:0000256" key="5">
    <source>
        <dbReference type="SAM" id="MobiDB-lite"/>
    </source>
</evidence>
<evidence type="ECO:0000269" key="6">
    <source>
    </source>
</evidence>
<evidence type="ECO:0000305" key="7"/>
<feature type="chain" id="PRO_0000085863" description="Serine/threonine-protein kinase CLA4">
    <location>
        <begin position="1"/>
        <end position="793"/>
    </location>
</feature>
<feature type="domain" description="PH" evidence="2">
    <location>
        <begin position="56"/>
        <end position="168"/>
    </location>
</feature>
<feature type="domain" description="CRIB" evidence="1">
    <location>
        <begin position="173"/>
        <end position="186"/>
    </location>
</feature>
<feature type="domain" description="Protein kinase" evidence="3">
    <location>
        <begin position="498"/>
        <end position="776"/>
    </location>
</feature>
<feature type="region of interest" description="Disordered" evidence="5">
    <location>
        <begin position="8"/>
        <end position="27"/>
    </location>
</feature>
<feature type="region of interest" description="Disordered" evidence="5">
    <location>
        <begin position="243"/>
        <end position="369"/>
    </location>
</feature>
<feature type="region of interest" description="Disordered" evidence="5">
    <location>
        <begin position="383"/>
        <end position="476"/>
    </location>
</feature>
<feature type="compositionally biased region" description="Polar residues" evidence="5">
    <location>
        <begin position="258"/>
        <end position="276"/>
    </location>
</feature>
<feature type="compositionally biased region" description="Polar residues" evidence="5">
    <location>
        <begin position="312"/>
        <end position="337"/>
    </location>
</feature>
<feature type="compositionally biased region" description="Polar residues" evidence="5">
    <location>
        <begin position="355"/>
        <end position="369"/>
    </location>
</feature>
<feature type="active site" description="Proton acceptor" evidence="3 4">
    <location>
        <position position="644"/>
    </location>
</feature>
<feature type="binding site" evidence="3">
    <location>
        <begin position="504"/>
        <end position="512"/>
    </location>
    <ligand>
        <name>ATP</name>
        <dbReference type="ChEBI" id="CHEBI:30616"/>
    </ligand>
</feature>
<feature type="binding site" evidence="3">
    <location>
        <position position="545"/>
    </location>
    <ligand>
        <name>ATP</name>
        <dbReference type="ChEBI" id="CHEBI:30616"/>
    </ligand>
</feature>
<dbReference type="EC" id="2.7.11.1"/>
<dbReference type="EMBL" id="AF286114">
    <property type="protein sequence ID" value="AAG17720.1"/>
    <property type="molecule type" value="Genomic_DNA"/>
</dbReference>
<dbReference type="EMBL" id="AE016818">
    <property type="protein sequence ID" value="AAS52480.1"/>
    <property type="molecule type" value="Genomic_DNA"/>
</dbReference>
<dbReference type="RefSeq" id="NP_984656.1">
    <property type="nucleotide sequence ID" value="NM_210009.1"/>
</dbReference>
<dbReference type="SMR" id="Q9HFW2"/>
<dbReference type="FunCoup" id="Q9HFW2">
    <property type="interactions" value="350"/>
</dbReference>
<dbReference type="STRING" id="284811.Q9HFW2"/>
<dbReference type="EnsemblFungi" id="AAS52480">
    <property type="protein sequence ID" value="AAS52480"/>
    <property type="gene ID" value="AGOS_AEL205W"/>
</dbReference>
<dbReference type="GeneID" id="4620838"/>
<dbReference type="KEGG" id="ago:AGOS_AEL205W"/>
<dbReference type="eggNOG" id="KOG0578">
    <property type="taxonomic scope" value="Eukaryota"/>
</dbReference>
<dbReference type="HOGENOM" id="CLU_000288_26_2_1"/>
<dbReference type="InParanoid" id="Q9HFW2"/>
<dbReference type="OMA" id="NFTHRVH"/>
<dbReference type="OrthoDB" id="248923at2759"/>
<dbReference type="Proteomes" id="UP000000591">
    <property type="component" value="Chromosome V"/>
</dbReference>
<dbReference type="GO" id="GO:0005737">
    <property type="term" value="C:cytoplasm"/>
    <property type="evidence" value="ECO:0000318"/>
    <property type="project" value="GO_Central"/>
</dbReference>
<dbReference type="GO" id="GO:0005524">
    <property type="term" value="F:ATP binding"/>
    <property type="evidence" value="ECO:0007669"/>
    <property type="project" value="UniProtKB-KW"/>
</dbReference>
<dbReference type="GO" id="GO:0106310">
    <property type="term" value="F:protein serine kinase activity"/>
    <property type="evidence" value="ECO:0007669"/>
    <property type="project" value="RHEA"/>
</dbReference>
<dbReference type="GO" id="GO:0004674">
    <property type="term" value="F:protein serine/threonine kinase activity"/>
    <property type="evidence" value="ECO:0000318"/>
    <property type="project" value="GO_Central"/>
</dbReference>
<dbReference type="GO" id="GO:0009267">
    <property type="term" value="P:cellular response to starvation"/>
    <property type="evidence" value="ECO:0000318"/>
    <property type="project" value="GO_Central"/>
</dbReference>
<dbReference type="GO" id="GO:0035556">
    <property type="term" value="P:intracellular signal transduction"/>
    <property type="evidence" value="ECO:0000318"/>
    <property type="project" value="GO_Central"/>
</dbReference>
<dbReference type="GO" id="GO:0043408">
    <property type="term" value="P:regulation of MAPK cascade"/>
    <property type="evidence" value="ECO:0000318"/>
    <property type="project" value="GO_Central"/>
</dbReference>
<dbReference type="CDD" id="cd01093">
    <property type="entry name" value="CRIB_PAK_like"/>
    <property type="match status" value="1"/>
</dbReference>
<dbReference type="CDD" id="cd13279">
    <property type="entry name" value="PH_Cla4_Ste20"/>
    <property type="match status" value="1"/>
</dbReference>
<dbReference type="CDD" id="cd06614">
    <property type="entry name" value="STKc_PAK"/>
    <property type="match status" value="1"/>
</dbReference>
<dbReference type="FunFam" id="1.10.510.10:FF:000139">
    <property type="entry name" value="Non-specific serine/threonine protein kinase"/>
    <property type="match status" value="1"/>
</dbReference>
<dbReference type="FunFam" id="2.30.29.30:FF:000356">
    <property type="entry name" value="Non-specific serine/threonine protein kinase"/>
    <property type="match status" value="1"/>
</dbReference>
<dbReference type="FunFam" id="3.90.810.10:FF:000005">
    <property type="entry name" value="Non-specific serine/threonine protein kinase"/>
    <property type="match status" value="1"/>
</dbReference>
<dbReference type="Gene3D" id="3.90.810.10">
    <property type="entry name" value="CRIB domain"/>
    <property type="match status" value="1"/>
</dbReference>
<dbReference type="Gene3D" id="3.30.200.20">
    <property type="entry name" value="Phosphorylase Kinase, domain 1"/>
    <property type="match status" value="1"/>
</dbReference>
<dbReference type="Gene3D" id="2.30.29.30">
    <property type="entry name" value="Pleckstrin-homology domain (PH domain)/Phosphotyrosine-binding domain (PTB)"/>
    <property type="match status" value="1"/>
</dbReference>
<dbReference type="Gene3D" id="1.10.510.10">
    <property type="entry name" value="Transferase(Phosphotransferase) domain 1"/>
    <property type="match status" value="1"/>
</dbReference>
<dbReference type="InterPro" id="IPR000095">
    <property type="entry name" value="CRIB_dom"/>
</dbReference>
<dbReference type="InterPro" id="IPR036936">
    <property type="entry name" value="CRIB_dom_sf"/>
</dbReference>
<dbReference type="InterPro" id="IPR011009">
    <property type="entry name" value="Kinase-like_dom_sf"/>
</dbReference>
<dbReference type="InterPro" id="IPR051931">
    <property type="entry name" value="PAK3-like"/>
</dbReference>
<dbReference type="InterPro" id="IPR033923">
    <property type="entry name" value="PAK_BD"/>
</dbReference>
<dbReference type="InterPro" id="IPR011993">
    <property type="entry name" value="PH-like_dom_sf"/>
</dbReference>
<dbReference type="InterPro" id="IPR001849">
    <property type="entry name" value="PH_domain"/>
</dbReference>
<dbReference type="InterPro" id="IPR000719">
    <property type="entry name" value="Prot_kinase_dom"/>
</dbReference>
<dbReference type="InterPro" id="IPR008271">
    <property type="entry name" value="Ser/Thr_kinase_AS"/>
</dbReference>
<dbReference type="PANTHER" id="PTHR45832">
    <property type="entry name" value="SERINE/THREONINE-PROTEIN KINASE SAMKA-RELATED-RELATED"/>
    <property type="match status" value="1"/>
</dbReference>
<dbReference type="PANTHER" id="PTHR45832:SF22">
    <property type="entry name" value="SERINE_THREONINE-PROTEIN KINASE SAMKA-RELATED"/>
    <property type="match status" value="1"/>
</dbReference>
<dbReference type="Pfam" id="PF00786">
    <property type="entry name" value="PBD"/>
    <property type="match status" value="1"/>
</dbReference>
<dbReference type="Pfam" id="PF00169">
    <property type="entry name" value="PH"/>
    <property type="match status" value="1"/>
</dbReference>
<dbReference type="Pfam" id="PF00069">
    <property type="entry name" value="Pkinase"/>
    <property type="match status" value="1"/>
</dbReference>
<dbReference type="SMART" id="SM00285">
    <property type="entry name" value="PBD"/>
    <property type="match status" value="1"/>
</dbReference>
<dbReference type="SMART" id="SM00233">
    <property type="entry name" value="PH"/>
    <property type="match status" value="1"/>
</dbReference>
<dbReference type="SMART" id="SM00220">
    <property type="entry name" value="S_TKc"/>
    <property type="match status" value="1"/>
</dbReference>
<dbReference type="SUPFAM" id="SSF50729">
    <property type="entry name" value="PH domain-like"/>
    <property type="match status" value="1"/>
</dbReference>
<dbReference type="SUPFAM" id="SSF56112">
    <property type="entry name" value="Protein kinase-like (PK-like)"/>
    <property type="match status" value="1"/>
</dbReference>
<dbReference type="PROSITE" id="PS50108">
    <property type="entry name" value="CRIB"/>
    <property type="match status" value="1"/>
</dbReference>
<dbReference type="PROSITE" id="PS50003">
    <property type="entry name" value="PH_DOMAIN"/>
    <property type="match status" value="1"/>
</dbReference>
<dbReference type="PROSITE" id="PS50011">
    <property type="entry name" value="PROTEIN_KINASE_DOM"/>
    <property type="match status" value="1"/>
</dbReference>
<dbReference type="PROSITE" id="PS00108">
    <property type="entry name" value="PROTEIN_KINASE_ST"/>
    <property type="match status" value="1"/>
</dbReference>
<protein>
    <recommendedName>
        <fullName>Serine/threonine-protein kinase CLA4</fullName>
        <ecNumber>2.7.11.1</ecNumber>
    </recommendedName>
</protein>
<name>CLA4_EREGS</name>
<proteinExistence type="inferred from homology"/>
<keyword id="KW-0067">ATP-binding</keyword>
<keyword id="KW-0418">Kinase</keyword>
<keyword id="KW-0547">Nucleotide-binding</keyword>
<keyword id="KW-1185">Reference proteome</keyword>
<keyword id="KW-0723">Serine/threonine-protein kinase</keyword>
<keyword id="KW-0808">Transferase</keyword>
<reference key="1">
    <citation type="journal article" date="2000" name="J. Cell Sci.">
        <title>A PAK-like protein kinase is required for maturation of young hyphae and septation in the filamentous ascomycete Ashbya gossypii.</title>
        <authorList>
            <person name="Ayad-Durieux Y."/>
            <person name="Knechtle P."/>
            <person name="Goff S."/>
            <person name="Dietrich F.S."/>
            <person name="Philippsen P."/>
        </authorList>
    </citation>
    <scope>NUCLEOTIDE SEQUENCE [GENOMIC DNA]</scope>
    <scope>FUNCTION</scope>
</reference>
<reference key="2">
    <citation type="journal article" date="2004" name="Science">
        <title>The Ashbya gossypii genome as a tool for mapping the ancient Saccharomyces cerevisiae genome.</title>
        <authorList>
            <person name="Dietrich F.S."/>
            <person name="Voegeli S."/>
            <person name="Brachat S."/>
            <person name="Lerch A."/>
            <person name="Gates K."/>
            <person name="Steiner S."/>
            <person name="Mohr C."/>
            <person name="Poehlmann R."/>
            <person name="Luedi P."/>
            <person name="Choi S."/>
            <person name="Wing R.A."/>
            <person name="Flavier A."/>
            <person name="Gaffney T.D."/>
            <person name="Philippsen P."/>
        </authorList>
    </citation>
    <scope>NUCLEOTIDE SEQUENCE [LARGE SCALE GENOMIC DNA]</scope>
    <source>
        <strain>ATCC 10895 / CBS 109.51 / FGSC 9923 / NRRL Y-1056</strain>
    </source>
</reference>
<reference key="3">
    <citation type="journal article" date="2013" name="G3 (Bethesda)">
        <title>Genomes of Ashbya fungi isolated from insects reveal four mating-type loci, numerous translocations, lack of transposons, and distinct gene duplications.</title>
        <authorList>
            <person name="Dietrich F.S."/>
            <person name="Voegeli S."/>
            <person name="Kuo S."/>
            <person name="Philippsen P."/>
        </authorList>
    </citation>
    <scope>GENOME REANNOTATION</scope>
    <source>
        <strain>ATCC 10895 / CBS 109.51 / FGSC 9923 / NRRL Y-1056</strain>
    </source>
</reference>
<gene>
    <name type="primary">CLA4</name>
    <name type="ordered locus">AEL205W</name>
</gene>
<sequence>MSLSAAARELSESDFQDIGPAPKPPPVAYNQTKPLVNYMSQMDLGAKSGGKMRAVQRKKSGWVSYKDDGLLSFLWQKRYMVLNDNYLSLYKGDSGREDAVVQIPLTSIVSVSRNQLKQNCFEVVRSSDRSGAPAAGAGGDSSKKSVFIATKTELDLHTWLDSIFSKCPLLSGVSSPTNFTHKVHVGFDPETGSFVGMPFNWEKLLKHSRITGEDWNNNSAAVIQVLQFYQEYNNGTATPTAQAAAQAAGAPGRPPMLTLSSNSSQASMQQIASTPPYSGGEMIPQRKAPTPPKPVVTSGSAIPSAKGGPNVGVTTSPSVHHQNTQHGKQQSPTQSGPPKSLPPLHRDEEGPTAPLGNSVSSVATKESPTERLLNNLSETSLMQKQLPAKPVAPPSSVGPVAPPLRLQPQRVAPGRPAQPGPHAPDTRPGGPNAMKQQHGPPAAASGQLGPDSKKPEGAPGHPTAVAKKKKAGRPTMSNAEIMTRLAAVTFNTDPSPFFQMIEKAGQGASGSVYLAQRLKIPPYDENSGVSQHELNDNIGDKVAIKQMILSKQPRKELIVNEILVMKDSQHKNIVNFLEAYLKTEDDLWVVMEYMEGGSLTDVIENSIGSDASESPMTEPQIAYIVRETCQGLKFLHDKHIIHRDIKSDNVLLDTHGRVKITDFGFCAKLTDKRSKRATMVGTPYWMAPEVVKQREYDEKVDVWSLGIMTIEMLEGEPPYLNEEPLKALYLIATNGTPKLKHPELLSLEIKRFLSVCLCVDVRYRASTEELLHHSFFETSCEPEELANLLKWKK</sequence>
<accession>Q9HFW2</accession>
<organism>
    <name type="scientific">Eremothecium gossypii (strain ATCC 10895 / CBS 109.51 / FGSC 9923 / NRRL Y-1056)</name>
    <name type="common">Yeast</name>
    <name type="synonym">Ashbya gossypii</name>
    <dbReference type="NCBI Taxonomy" id="284811"/>
    <lineage>
        <taxon>Eukaryota</taxon>
        <taxon>Fungi</taxon>
        <taxon>Dikarya</taxon>
        <taxon>Ascomycota</taxon>
        <taxon>Saccharomycotina</taxon>
        <taxon>Saccharomycetes</taxon>
        <taxon>Saccharomycetales</taxon>
        <taxon>Saccharomycetaceae</taxon>
        <taxon>Eremothecium</taxon>
    </lineage>
</organism>